<protein>
    <recommendedName>
        <fullName evidence="1">3-isopropylmalate dehydrogenase</fullName>
        <ecNumber evidence="1">1.1.1.85</ecNumber>
    </recommendedName>
    <alternativeName>
        <fullName evidence="1">3-IPM-DH</fullName>
    </alternativeName>
    <alternativeName>
        <fullName evidence="1">Beta-IPM dehydrogenase</fullName>
        <shortName evidence="1">IMDH</shortName>
    </alternativeName>
</protein>
<proteinExistence type="inferred from homology"/>
<feature type="chain" id="PRO_1000063872" description="3-isopropylmalate dehydrogenase">
    <location>
        <begin position="1"/>
        <end position="336"/>
    </location>
</feature>
<feature type="binding site" evidence="1">
    <location>
        <position position="87"/>
    </location>
    <ligand>
        <name>substrate</name>
    </ligand>
</feature>
<feature type="binding site" evidence="1">
    <location>
        <position position="97"/>
    </location>
    <ligand>
        <name>substrate</name>
    </ligand>
</feature>
<feature type="binding site" evidence="1">
    <location>
        <position position="121"/>
    </location>
    <ligand>
        <name>substrate</name>
    </ligand>
</feature>
<feature type="binding site" evidence="1">
    <location>
        <position position="211"/>
    </location>
    <ligand>
        <name>Mg(2+)</name>
        <dbReference type="ChEBI" id="CHEBI:18420"/>
    </ligand>
</feature>
<feature type="binding site" evidence="1">
    <location>
        <position position="211"/>
    </location>
    <ligand>
        <name>substrate</name>
    </ligand>
</feature>
<feature type="binding site" evidence="1">
    <location>
        <position position="235"/>
    </location>
    <ligand>
        <name>Mg(2+)</name>
        <dbReference type="ChEBI" id="CHEBI:18420"/>
    </ligand>
</feature>
<feature type="binding site" evidence="1">
    <location>
        <position position="239"/>
    </location>
    <ligand>
        <name>Mg(2+)</name>
        <dbReference type="ChEBI" id="CHEBI:18420"/>
    </ligand>
</feature>
<feature type="binding site" evidence="1">
    <location>
        <begin position="271"/>
        <end position="283"/>
    </location>
    <ligand>
        <name>NAD(+)</name>
        <dbReference type="ChEBI" id="CHEBI:57540"/>
    </ligand>
</feature>
<feature type="site" description="Important for catalysis" evidence="1">
    <location>
        <position position="128"/>
    </location>
</feature>
<feature type="site" description="Important for catalysis" evidence="1">
    <location>
        <position position="178"/>
    </location>
</feature>
<organism>
    <name type="scientific">Mycobacterium bovis (strain BCG / Pasteur 1173P2)</name>
    <dbReference type="NCBI Taxonomy" id="410289"/>
    <lineage>
        <taxon>Bacteria</taxon>
        <taxon>Bacillati</taxon>
        <taxon>Actinomycetota</taxon>
        <taxon>Actinomycetes</taxon>
        <taxon>Mycobacteriales</taxon>
        <taxon>Mycobacteriaceae</taxon>
        <taxon>Mycobacterium</taxon>
        <taxon>Mycobacterium tuberculosis complex</taxon>
    </lineage>
</organism>
<comment type="function">
    <text evidence="1">Catalyzes the oxidation of 3-carboxy-2-hydroxy-4-methylpentanoate (3-isopropylmalate) to 3-carboxy-4-methyl-2-oxopentanoate. The product decarboxylates to 4-methyl-2 oxopentanoate.</text>
</comment>
<comment type="catalytic activity">
    <reaction evidence="1">
        <text>(2R,3S)-3-isopropylmalate + NAD(+) = 4-methyl-2-oxopentanoate + CO2 + NADH</text>
        <dbReference type="Rhea" id="RHEA:32271"/>
        <dbReference type="ChEBI" id="CHEBI:16526"/>
        <dbReference type="ChEBI" id="CHEBI:17865"/>
        <dbReference type="ChEBI" id="CHEBI:35121"/>
        <dbReference type="ChEBI" id="CHEBI:57540"/>
        <dbReference type="ChEBI" id="CHEBI:57945"/>
        <dbReference type="EC" id="1.1.1.85"/>
    </reaction>
</comment>
<comment type="cofactor">
    <cofactor evidence="1">
        <name>Mg(2+)</name>
        <dbReference type="ChEBI" id="CHEBI:18420"/>
    </cofactor>
    <cofactor evidence="1">
        <name>Mn(2+)</name>
        <dbReference type="ChEBI" id="CHEBI:29035"/>
    </cofactor>
    <text evidence="1">Binds 1 Mg(2+) or Mn(2+) ion per subunit.</text>
</comment>
<comment type="pathway">
    <text evidence="1">Amino-acid biosynthesis; L-leucine biosynthesis; L-leucine from 3-methyl-2-oxobutanoate: step 3/4.</text>
</comment>
<comment type="subunit">
    <text evidence="1">Homodimer.</text>
</comment>
<comment type="subcellular location">
    <subcellularLocation>
        <location evidence="1">Cytoplasm</location>
    </subcellularLocation>
</comment>
<comment type="similarity">
    <text evidence="1">Belongs to the isocitrate and isopropylmalate dehydrogenases family. LeuB type 2 subfamily.</text>
</comment>
<gene>
    <name evidence="1" type="primary">leuB</name>
    <name type="ordered locus">BCG_3016c</name>
</gene>
<name>LEU3_MYCBP</name>
<keyword id="KW-0028">Amino-acid biosynthesis</keyword>
<keyword id="KW-0100">Branched-chain amino acid biosynthesis</keyword>
<keyword id="KW-0963">Cytoplasm</keyword>
<keyword id="KW-0432">Leucine biosynthesis</keyword>
<keyword id="KW-0460">Magnesium</keyword>
<keyword id="KW-0464">Manganese</keyword>
<keyword id="KW-0479">Metal-binding</keyword>
<keyword id="KW-0520">NAD</keyword>
<keyword id="KW-0560">Oxidoreductase</keyword>
<dbReference type="EC" id="1.1.1.85" evidence="1"/>
<dbReference type="EMBL" id="AM408590">
    <property type="protein sequence ID" value="CAL73005.1"/>
    <property type="molecule type" value="Genomic_DNA"/>
</dbReference>
<dbReference type="RefSeq" id="WP_003415144.1">
    <property type="nucleotide sequence ID" value="NC_008769.1"/>
</dbReference>
<dbReference type="SMR" id="A1KMY9"/>
<dbReference type="KEGG" id="mbb:BCG_3016c"/>
<dbReference type="HOGENOM" id="CLU_031953_0_1_11"/>
<dbReference type="UniPathway" id="UPA00048">
    <property type="reaction ID" value="UER00072"/>
</dbReference>
<dbReference type="Proteomes" id="UP000001472">
    <property type="component" value="Chromosome"/>
</dbReference>
<dbReference type="GO" id="GO:0005737">
    <property type="term" value="C:cytoplasm"/>
    <property type="evidence" value="ECO:0007669"/>
    <property type="project" value="UniProtKB-SubCell"/>
</dbReference>
<dbReference type="GO" id="GO:0003862">
    <property type="term" value="F:3-isopropylmalate dehydrogenase activity"/>
    <property type="evidence" value="ECO:0007669"/>
    <property type="project" value="UniProtKB-UniRule"/>
</dbReference>
<dbReference type="GO" id="GO:0000287">
    <property type="term" value="F:magnesium ion binding"/>
    <property type="evidence" value="ECO:0007669"/>
    <property type="project" value="InterPro"/>
</dbReference>
<dbReference type="GO" id="GO:0051287">
    <property type="term" value="F:NAD binding"/>
    <property type="evidence" value="ECO:0007669"/>
    <property type="project" value="InterPro"/>
</dbReference>
<dbReference type="GO" id="GO:0009098">
    <property type="term" value="P:L-leucine biosynthetic process"/>
    <property type="evidence" value="ECO:0007669"/>
    <property type="project" value="UniProtKB-UniRule"/>
</dbReference>
<dbReference type="FunFam" id="3.40.718.10:FF:000026">
    <property type="entry name" value="3-isopropylmalate dehydrogenase"/>
    <property type="match status" value="1"/>
</dbReference>
<dbReference type="Gene3D" id="3.40.718.10">
    <property type="entry name" value="Isopropylmalate Dehydrogenase"/>
    <property type="match status" value="1"/>
</dbReference>
<dbReference type="HAMAP" id="MF_01035">
    <property type="entry name" value="LeuB_type2"/>
    <property type="match status" value="1"/>
</dbReference>
<dbReference type="InterPro" id="IPR050501">
    <property type="entry name" value="ICDH/IPMDH"/>
</dbReference>
<dbReference type="InterPro" id="IPR019818">
    <property type="entry name" value="IsoCit/isopropylmalate_DH_CS"/>
</dbReference>
<dbReference type="InterPro" id="IPR024084">
    <property type="entry name" value="IsoPropMal-DH-like_dom"/>
</dbReference>
<dbReference type="InterPro" id="IPR023698">
    <property type="entry name" value="LeuB_actb"/>
</dbReference>
<dbReference type="NCBIfam" id="NF002898">
    <property type="entry name" value="PRK03437.1"/>
    <property type="match status" value="1"/>
</dbReference>
<dbReference type="PANTHER" id="PTHR43275">
    <property type="entry name" value="D-MALATE DEHYDROGENASE [DECARBOXYLATING]"/>
    <property type="match status" value="1"/>
</dbReference>
<dbReference type="PANTHER" id="PTHR43275:SF1">
    <property type="entry name" value="D-MALATE DEHYDROGENASE [DECARBOXYLATING]"/>
    <property type="match status" value="1"/>
</dbReference>
<dbReference type="Pfam" id="PF00180">
    <property type="entry name" value="Iso_dh"/>
    <property type="match status" value="1"/>
</dbReference>
<dbReference type="SMART" id="SM01329">
    <property type="entry name" value="Iso_dh"/>
    <property type="match status" value="1"/>
</dbReference>
<dbReference type="SUPFAM" id="SSF53659">
    <property type="entry name" value="Isocitrate/Isopropylmalate dehydrogenase-like"/>
    <property type="match status" value="1"/>
</dbReference>
<dbReference type="PROSITE" id="PS00470">
    <property type="entry name" value="IDH_IMDH"/>
    <property type="match status" value="1"/>
</dbReference>
<evidence type="ECO:0000255" key="1">
    <source>
        <dbReference type="HAMAP-Rule" id="MF_01035"/>
    </source>
</evidence>
<reference key="1">
    <citation type="journal article" date="2007" name="Proc. Natl. Acad. Sci. U.S.A.">
        <title>Genome plasticity of BCG and impact on vaccine efficacy.</title>
        <authorList>
            <person name="Brosch R."/>
            <person name="Gordon S.V."/>
            <person name="Garnier T."/>
            <person name="Eiglmeier K."/>
            <person name="Frigui W."/>
            <person name="Valenti P."/>
            <person name="Dos Santos S."/>
            <person name="Duthoy S."/>
            <person name="Lacroix C."/>
            <person name="Garcia-Pelayo C."/>
            <person name="Inwald J.K."/>
            <person name="Golby P."/>
            <person name="Garcia J.N."/>
            <person name="Hewinson R.G."/>
            <person name="Behr M.A."/>
            <person name="Quail M.A."/>
            <person name="Churcher C."/>
            <person name="Barrell B.G."/>
            <person name="Parkhill J."/>
            <person name="Cole S.T."/>
        </authorList>
    </citation>
    <scope>NUCLEOTIDE SEQUENCE [LARGE SCALE GENOMIC DNA]</scope>
    <source>
        <strain>BCG / Pasteur 1173P2</strain>
    </source>
</reference>
<sequence length="336" mass="35272">MKLAIIAGDGIGPEVTAEAVKVLDAVVPGVQKTSYDLGARRFHATGEVLPDSVVAELRNHDAILLGAIGDPSVPSGVLERGLLLRLRFELDHHINLRPARLYPGVASPLSGNPGIDFVVVREGTEGPYTGNGGAIRVGTPNEVATEVSVNTAFGVRRVVADAFERARRRRKHLTLVHKTNVLTLAGGLWLRTVDEVGECYPDVEVAYQHVDAATIHMITDPGRFDVIVTDNLFGDIITDLAAAVCGGIGLAASGNIDATRANPSMFEPVHGSAPDIAGQGIADPTAAIMSVALLLSHLGEHDAAARVDRAVEAHLATRGSERLATSDVGERIAAAL</sequence>
<accession>A1KMY9</accession>